<name>HIS82_LEGPL</name>
<proteinExistence type="inferred from homology"/>
<protein>
    <recommendedName>
        <fullName evidence="1">Histidinol-phosphate aminotransferase 2</fullName>
        <ecNumber evidence="1">2.6.1.9</ecNumber>
    </recommendedName>
    <alternativeName>
        <fullName evidence="1">Imidazole acetol-phosphate transaminase 2</fullName>
    </alternativeName>
</protein>
<evidence type="ECO:0000255" key="1">
    <source>
        <dbReference type="HAMAP-Rule" id="MF_01023"/>
    </source>
</evidence>
<sequence length="369" mass="41435">MSIDFQQLPHAGIRSLIPYVPGKSIEELAKEKGITDIIKLASNENPLGCSPLALSAIQTMSSHYIATYPSPWNHPLMSKLASYLKVKPEQLFLSNGSDYLFNILLNCFALHTDRHILTHDYAFSTYAIQANSLQIPINSVPIGHNWEVNITDIVNACNQKTGIIFIANPNNPTGVLIQQEEIKYLLEQIPKSTLLVLDEAYYEFAASQLTVNSLDWLEEHPNLVVTRTFSKIYGMAGLRLGYAIANPSIINILKRVQLPFIVNQVALAAAYAAIDDDDFIQSSLKMNNEGMSQLQAGFNELNIKYLPSSCNFLTFDCEEDSMALYNYLLDNGIIVRPLHAYKMNNFIRVTIGTKEQNSRFLTALKNFYL</sequence>
<gene>
    <name evidence="1" type="primary">hisC2</name>
    <name type="ordered locus">lpl1974</name>
</gene>
<feature type="chain" id="PRO_0000153378" description="Histidinol-phosphate aminotransferase 2">
    <location>
        <begin position="1"/>
        <end position="369"/>
    </location>
</feature>
<feature type="modified residue" description="N6-(pyridoxal phosphate)lysine" evidence="1">
    <location>
        <position position="231"/>
    </location>
</feature>
<accession>Q5WV43</accession>
<keyword id="KW-0028">Amino-acid biosynthesis</keyword>
<keyword id="KW-0032">Aminotransferase</keyword>
<keyword id="KW-0368">Histidine biosynthesis</keyword>
<keyword id="KW-0663">Pyridoxal phosphate</keyword>
<keyword id="KW-0808">Transferase</keyword>
<comment type="catalytic activity">
    <reaction evidence="1">
        <text>L-histidinol phosphate + 2-oxoglutarate = 3-(imidazol-4-yl)-2-oxopropyl phosphate + L-glutamate</text>
        <dbReference type="Rhea" id="RHEA:23744"/>
        <dbReference type="ChEBI" id="CHEBI:16810"/>
        <dbReference type="ChEBI" id="CHEBI:29985"/>
        <dbReference type="ChEBI" id="CHEBI:57766"/>
        <dbReference type="ChEBI" id="CHEBI:57980"/>
        <dbReference type="EC" id="2.6.1.9"/>
    </reaction>
</comment>
<comment type="cofactor">
    <cofactor evidence="1">
        <name>pyridoxal 5'-phosphate</name>
        <dbReference type="ChEBI" id="CHEBI:597326"/>
    </cofactor>
</comment>
<comment type="pathway">
    <text evidence="1">Amino-acid biosynthesis; L-histidine biosynthesis; L-histidine from 5-phospho-alpha-D-ribose 1-diphosphate: step 7/9.</text>
</comment>
<comment type="subunit">
    <text evidence="1">Homodimer.</text>
</comment>
<comment type="similarity">
    <text evidence="1">Belongs to the class-II pyridoxal-phosphate-dependent aminotransferase family. Histidinol-phosphate aminotransferase subfamily.</text>
</comment>
<organism>
    <name type="scientific">Legionella pneumophila (strain Lens)</name>
    <dbReference type="NCBI Taxonomy" id="297245"/>
    <lineage>
        <taxon>Bacteria</taxon>
        <taxon>Pseudomonadati</taxon>
        <taxon>Pseudomonadota</taxon>
        <taxon>Gammaproteobacteria</taxon>
        <taxon>Legionellales</taxon>
        <taxon>Legionellaceae</taxon>
        <taxon>Legionella</taxon>
    </lineage>
</organism>
<reference key="1">
    <citation type="journal article" date="2004" name="Nat. Genet.">
        <title>Evidence in the Legionella pneumophila genome for exploitation of host cell functions and high genome plasticity.</title>
        <authorList>
            <person name="Cazalet C."/>
            <person name="Rusniok C."/>
            <person name="Brueggemann H."/>
            <person name="Zidane N."/>
            <person name="Magnier A."/>
            <person name="Ma L."/>
            <person name="Tichit M."/>
            <person name="Jarraud S."/>
            <person name="Bouchier C."/>
            <person name="Vandenesch F."/>
            <person name="Kunst F."/>
            <person name="Etienne J."/>
            <person name="Glaser P."/>
            <person name="Buchrieser C."/>
        </authorList>
    </citation>
    <scope>NUCLEOTIDE SEQUENCE [LARGE SCALE GENOMIC DNA]</scope>
    <source>
        <strain>Lens</strain>
    </source>
</reference>
<dbReference type="EC" id="2.6.1.9" evidence="1"/>
<dbReference type="EMBL" id="CR628337">
    <property type="protein sequence ID" value="CAH16214.1"/>
    <property type="molecule type" value="Genomic_DNA"/>
</dbReference>
<dbReference type="RefSeq" id="WP_011215962.1">
    <property type="nucleotide sequence ID" value="NC_006369.1"/>
</dbReference>
<dbReference type="SMR" id="Q5WV43"/>
<dbReference type="KEGG" id="lpf:lpl1974"/>
<dbReference type="LegioList" id="lpl1974"/>
<dbReference type="HOGENOM" id="CLU_017584_3_3_6"/>
<dbReference type="UniPathway" id="UPA00031">
    <property type="reaction ID" value="UER00012"/>
</dbReference>
<dbReference type="Proteomes" id="UP000002517">
    <property type="component" value="Chromosome"/>
</dbReference>
<dbReference type="GO" id="GO:0004400">
    <property type="term" value="F:histidinol-phosphate transaminase activity"/>
    <property type="evidence" value="ECO:0007669"/>
    <property type="project" value="UniProtKB-UniRule"/>
</dbReference>
<dbReference type="GO" id="GO:0030170">
    <property type="term" value="F:pyridoxal phosphate binding"/>
    <property type="evidence" value="ECO:0007669"/>
    <property type="project" value="InterPro"/>
</dbReference>
<dbReference type="GO" id="GO:0000105">
    <property type="term" value="P:L-histidine biosynthetic process"/>
    <property type="evidence" value="ECO:0007669"/>
    <property type="project" value="UniProtKB-UniRule"/>
</dbReference>
<dbReference type="CDD" id="cd00609">
    <property type="entry name" value="AAT_like"/>
    <property type="match status" value="1"/>
</dbReference>
<dbReference type="Gene3D" id="3.90.1150.10">
    <property type="entry name" value="Aspartate Aminotransferase, domain 1"/>
    <property type="match status" value="1"/>
</dbReference>
<dbReference type="Gene3D" id="3.40.640.10">
    <property type="entry name" value="Type I PLP-dependent aspartate aminotransferase-like (Major domain)"/>
    <property type="match status" value="1"/>
</dbReference>
<dbReference type="HAMAP" id="MF_01023">
    <property type="entry name" value="HisC_aminotrans_2"/>
    <property type="match status" value="1"/>
</dbReference>
<dbReference type="InterPro" id="IPR004839">
    <property type="entry name" value="Aminotransferase_I/II_large"/>
</dbReference>
<dbReference type="InterPro" id="IPR005861">
    <property type="entry name" value="HisP_aminotrans"/>
</dbReference>
<dbReference type="InterPro" id="IPR050106">
    <property type="entry name" value="HistidinolP_aminotransfase"/>
</dbReference>
<dbReference type="InterPro" id="IPR015424">
    <property type="entry name" value="PyrdxlP-dep_Trfase"/>
</dbReference>
<dbReference type="InterPro" id="IPR015421">
    <property type="entry name" value="PyrdxlP-dep_Trfase_major"/>
</dbReference>
<dbReference type="InterPro" id="IPR015422">
    <property type="entry name" value="PyrdxlP-dep_Trfase_small"/>
</dbReference>
<dbReference type="NCBIfam" id="TIGR01141">
    <property type="entry name" value="hisC"/>
    <property type="match status" value="1"/>
</dbReference>
<dbReference type="PANTHER" id="PTHR43643:SF3">
    <property type="entry name" value="HISTIDINOL-PHOSPHATE AMINOTRANSFERASE"/>
    <property type="match status" value="1"/>
</dbReference>
<dbReference type="PANTHER" id="PTHR43643">
    <property type="entry name" value="HISTIDINOL-PHOSPHATE AMINOTRANSFERASE 2"/>
    <property type="match status" value="1"/>
</dbReference>
<dbReference type="Pfam" id="PF00155">
    <property type="entry name" value="Aminotran_1_2"/>
    <property type="match status" value="1"/>
</dbReference>
<dbReference type="SUPFAM" id="SSF53383">
    <property type="entry name" value="PLP-dependent transferases"/>
    <property type="match status" value="1"/>
</dbReference>